<protein>
    <recommendedName>
        <fullName evidence="1">8-amino-7-oxononanoate synthase</fullName>
        <shortName evidence="1">AONS</shortName>
        <ecNumber evidence="1">2.3.1.47</ecNumber>
    </recommendedName>
    <alternativeName>
        <fullName evidence="1">7-keto-8-amino-pelargonic acid synthase</fullName>
        <shortName evidence="1">7-KAP synthase</shortName>
        <shortName evidence="1">KAPA synthase</shortName>
    </alternativeName>
    <alternativeName>
        <fullName evidence="1">8-amino-7-ketopelargonate synthase</fullName>
    </alternativeName>
</protein>
<proteinExistence type="inferred from homology"/>
<organism>
    <name type="scientific">Escherichia coli O1:K1 / APEC</name>
    <dbReference type="NCBI Taxonomy" id="405955"/>
    <lineage>
        <taxon>Bacteria</taxon>
        <taxon>Pseudomonadati</taxon>
        <taxon>Pseudomonadota</taxon>
        <taxon>Gammaproteobacteria</taxon>
        <taxon>Enterobacterales</taxon>
        <taxon>Enterobacteriaceae</taxon>
        <taxon>Escherichia</taxon>
    </lineage>
</organism>
<comment type="function">
    <text evidence="1">Catalyzes the decarboxylative condensation of pimeloyl-[acyl-carrier protein] and L-alanine to produce 8-amino-7-oxononanoate (AON), [acyl-carrier protein], and carbon dioxide.</text>
</comment>
<comment type="catalytic activity">
    <reaction evidence="1">
        <text>6-carboxyhexanoyl-[ACP] + L-alanine + H(+) = (8S)-8-amino-7-oxononanoate + holo-[ACP] + CO2</text>
        <dbReference type="Rhea" id="RHEA:42288"/>
        <dbReference type="Rhea" id="RHEA-COMP:9685"/>
        <dbReference type="Rhea" id="RHEA-COMP:9955"/>
        <dbReference type="ChEBI" id="CHEBI:15378"/>
        <dbReference type="ChEBI" id="CHEBI:16526"/>
        <dbReference type="ChEBI" id="CHEBI:57972"/>
        <dbReference type="ChEBI" id="CHEBI:64479"/>
        <dbReference type="ChEBI" id="CHEBI:78846"/>
        <dbReference type="ChEBI" id="CHEBI:149468"/>
        <dbReference type="EC" id="2.3.1.47"/>
    </reaction>
</comment>
<comment type="cofactor">
    <cofactor evidence="1">
        <name>pyridoxal 5'-phosphate</name>
        <dbReference type="ChEBI" id="CHEBI:597326"/>
    </cofactor>
</comment>
<comment type="pathway">
    <text evidence="1">Cofactor biosynthesis; biotin biosynthesis.</text>
</comment>
<comment type="subunit">
    <text evidence="1">Homodimer.</text>
</comment>
<comment type="similarity">
    <text evidence="1">Belongs to the class-II pyridoxal-phosphate-dependent aminotransferase family. BioF subfamily.</text>
</comment>
<sequence>MIWQEKIDAALDARRVADALRRRYPVAQGAGRWLVADDCQYLNFSSNDYLGLSHHPQIIRAWQQGADQFGVGSGGSGHVSGYSVAHQVLEEELAEWLGYSRALLFISGFAANQAVIAAMMAKEDRIVADRLSHASLLEAASLSPSPLRRFAHNDVTHLARLLASPCPGQQLVVTEGVFSMDGDSAPLEEIQQVTQQHDGWLMVDDAHGTGVIGEQGRGSCWLQKVKPELLVVTFGKGFGVSGAAVLCSNTVADYLLQFARHLIYSTSMPPAQAQALRASLAVIRSDEGDARREKLAALITRFRAGVQDLPFTLAGSCSAIQPLIVGDNSRALQLAEKLRQQGCWVTAIRPPTVPAGTARLRLTLTAAHEMQDIDRLLEVLHGNG</sequence>
<dbReference type="EC" id="2.3.1.47" evidence="1"/>
<dbReference type="EMBL" id="CP000468">
    <property type="protein sequence ID" value="ABJ00158.1"/>
    <property type="molecule type" value="Genomic_DNA"/>
</dbReference>
<dbReference type="RefSeq" id="WP_000638121.1">
    <property type="nucleotide sequence ID" value="NZ_CADILS010000026.1"/>
</dbReference>
<dbReference type="SMR" id="A1A918"/>
<dbReference type="KEGG" id="ecv:APECO1_1313"/>
<dbReference type="HOGENOM" id="CLU_015846_11_2_6"/>
<dbReference type="UniPathway" id="UPA00078"/>
<dbReference type="Proteomes" id="UP000008216">
    <property type="component" value="Chromosome"/>
</dbReference>
<dbReference type="GO" id="GO:0008710">
    <property type="term" value="F:8-amino-7-oxononanoate synthase activity"/>
    <property type="evidence" value="ECO:0007669"/>
    <property type="project" value="UniProtKB-UniRule"/>
</dbReference>
<dbReference type="GO" id="GO:0030170">
    <property type="term" value="F:pyridoxal phosphate binding"/>
    <property type="evidence" value="ECO:0007669"/>
    <property type="project" value="UniProtKB-UniRule"/>
</dbReference>
<dbReference type="GO" id="GO:0009102">
    <property type="term" value="P:biotin biosynthetic process"/>
    <property type="evidence" value="ECO:0007669"/>
    <property type="project" value="UniProtKB-UniRule"/>
</dbReference>
<dbReference type="CDD" id="cd06454">
    <property type="entry name" value="KBL_like"/>
    <property type="match status" value="1"/>
</dbReference>
<dbReference type="FunFam" id="3.40.640.10:FF:000095">
    <property type="entry name" value="8-amino-7-oxononanoate synthase"/>
    <property type="match status" value="1"/>
</dbReference>
<dbReference type="FunFam" id="3.90.1150.10:FF:000036">
    <property type="entry name" value="8-amino-7-oxononanoate synthase"/>
    <property type="match status" value="1"/>
</dbReference>
<dbReference type="Gene3D" id="3.90.1150.10">
    <property type="entry name" value="Aspartate Aminotransferase, domain 1"/>
    <property type="match status" value="1"/>
</dbReference>
<dbReference type="Gene3D" id="3.40.640.10">
    <property type="entry name" value="Type I PLP-dependent aspartate aminotransferase-like (Major domain)"/>
    <property type="match status" value="1"/>
</dbReference>
<dbReference type="HAMAP" id="MF_01693">
    <property type="entry name" value="BioF_aminotrans_2"/>
    <property type="match status" value="1"/>
</dbReference>
<dbReference type="InterPro" id="IPR001917">
    <property type="entry name" value="Aminotrans_II_pyridoxalP_BS"/>
</dbReference>
<dbReference type="InterPro" id="IPR004839">
    <property type="entry name" value="Aminotransferase_I/II_large"/>
</dbReference>
<dbReference type="InterPro" id="IPR050087">
    <property type="entry name" value="AON_synthase_class-II"/>
</dbReference>
<dbReference type="InterPro" id="IPR004723">
    <property type="entry name" value="AONS_Archaea/Proteobacteria"/>
</dbReference>
<dbReference type="InterPro" id="IPR022834">
    <property type="entry name" value="AONS_Proteobacteria"/>
</dbReference>
<dbReference type="InterPro" id="IPR015424">
    <property type="entry name" value="PyrdxlP-dep_Trfase"/>
</dbReference>
<dbReference type="InterPro" id="IPR015421">
    <property type="entry name" value="PyrdxlP-dep_Trfase_major"/>
</dbReference>
<dbReference type="InterPro" id="IPR015422">
    <property type="entry name" value="PyrdxlP-dep_Trfase_small"/>
</dbReference>
<dbReference type="NCBIfam" id="TIGR00858">
    <property type="entry name" value="bioF"/>
    <property type="match status" value="1"/>
</dbReference>
<dbReference type="PANTHER" id="PTHR13693:SF100">
    <property type="entry name" value="8-AMINO-7-OXONONANOATE SYNTHASE"/>
    <property type="match status" value="1"/>
</dbReference>
<dbReference type="PANTHER" id="PTHR13693">
    <property type="entry name" value="CLASS II AMINOTRANSFERASE/8-AMINO-7-OXONONANOATE SYNTHASE"/>
    <property type="match status" value="1"/>
</dbReference>
<dbReference type="Pfam" id="PF00155">
    <property type="entry name" value="Aminotran_1_2"/>
    <property type="match status" value="1"/>
</dbReference>
<dbReference type="SUPFAM" id="SSF53383">
    <property type="entry name" value="PLP-dependent transferases"/>
    <property type="match status" value="1"/>
</dbReference>
<dbReference type="PROSITE" id="PS00599">
    <property type="entry name" value="AA_TRANSFER_CLASS_2"/>
    <property type="match status" value="1"/>
</dbReference>
<name>BIOF_ECOK1</name>
<accession>A1A918</accession>
<keyword id="KW-0093">Biotin biosynthesis</keyword>
<keyword id="KW-0663">Pyridoxal phosphate</keyword>
<keyword id="KW-1185">Reference proteome</keyword>
<keyword id="KW-0808">Transferase</keyword>
<feature type="chain" id="PRO_0000380978" description="8-amino-7-oxononanoate synthase">
    <location>
        <begin position="1"/>
        <end position="384"/>
    </location>
</feature>
<feature type="binding site" evidence="1">
    <location>
        <position position="21"/>
    </location>
    <ligand>
        <name>substrate</name>
    </ligand>
</feature>
<feature type="binding site" evidence="1">
    <location>
        <begin position="108"/>
        <end position="109"/>
    </location>
    <ligand>
        <name>pyridoxal 5'-phosphate</name>
        <dbReference type="ChEBI" id="CHEBI:597326"/>
    </ligand>
</feature>
<feature type="binding site" evidence="1">
    <location>
        <position position="133"/>
    </location>
    <ligand>
        <name>substrate</name>
    </ligand>
</feature>
<feature type="binding site" evidence="1">
    <location>
        <position position="179"/>
    </location>
    <ligand>
        <name>pyridoxal 5'-phosphate</name>
        <dbReference type="ChEBI" id="CHEBI:597326"/>
    </ligand>
</feature>
<feature type="binding site" evidence="1">
    <location>
        <position position="207"/>
    </location>
    <ligand>
        <name>pyridoxal 5'-phosphate</name>
        <dbReference type="ChEBI" id="CHEBI:597326"/>
    </ligand>
</feature>
<feature type="binding site" evidence="1">
    <location>
        <position position="233"/>
    </location>
    <ligand>
        <name>pyridoxal 5'-phosphate</name>
        <dbReference type="ChEBI" id="CHEBI:597326"/>
    </ligand>
</feature>
<feature type="binding site" evidence="1">
    <location>
        <position position="352"/>
    </location>
    <ligand>
        <name>substrate</name>
    </ligand>
</feature>
<feature type="modified residue" description="N6-(pyridoxal phosphate)lysine" evidence="1">
    <location>
        <position position="236"/>
    </location>
</feature>
<gene>
    <name evidence="1" type="primary">bioF</name>
    <name type="ordered locus">Ecok1_06640</name>
    <name type="ORF">APECO1_1313</name>
</gene>
<evidence type="ECO:0000255" key="1">
    <source>
        <dbReference type="HAMAP-Rule" id="MF_01693"/>
    </source>
</evidence>
<reference key="1">
    <citation type="journal article" date="2007" name="J. Bacteriol.">
        <title>The genome sequence of avian pathogenic Escherichia coli strain O1:K1:H7 shares strong similarities with human extraintestinal pathogenic E. coli genomes.</title>
        <authorList>
            <person name="Johnson T.J."/>
            <person name="Kariyawasam S."/>
            <person name="Wannemuehler Y."/>
            <person name="Mangiamele P."/>
            <person name="Johnson S.J."/>
            <person name="Doetkott C."/>
            <person name="Skyberg J.A."/>
            <person name="Lynne A.M."/>
            <person name="Johnson J.R."/>
            <person name="Nolan L.K."/>
        </authorList>
    </citation>
    <scope>NUCLEOTIDE SEQUENCE [LARGE SCALE GENOMIC DNA]</scope>
</reference>